<dbReference type="EC" id="2.1.1.199" evidence="1"/>
<dbReference type="EMBL" id="CP000082">
    <property type="protein sequence ID" value="AAZ19903.1"/>
    <property type="status" value="ALT_INIT"/>
    <property type="molecule type" value="Genomic_DNA"/>
</dbReference>
<dbReference type="RefSeq" id="WP_227500382.1">
    <property type="nucleotide sequence ID" value="NC_007204.1"/>
</dbReference>
<dbReference type="SMR" id="Q4FQ05"/>
<dbReference type="STRING" id="259536.Psyc_2056"/>
<dbReference type="KEGG" id="par:Psyc_2056"/>
<dbReference type="eggNOG" id="COG0275">
    <property type="taxonomic scope" value="Bacteria"/>
</dbReference>
<dbReference type="HOGENOM" id="CLU_038422_2_0_6"/>
<dbReference type="Proteomes" id="UP000000546">
    <property type="component" value="Chromosome"/>
</dbReference>
<dbReference type="GO" id="GO:0005737">
    <property type="term" value="C:cytoplasm"/>
    <property type="evidence" value="ECO:0007669"/>
    <property type="project" value="UniProtKB-SubCell"/>
</dbReference>
<dbReference type="GO" id="GO:0071424">
    <property type="term" value="F:rRNA (cytosine-N4-)-methyltransferase activity"/>
    <property type="evidence" value="ECO:0007669"/>
    <property type="project" value="UniProtKB-UniRule"/>
</dbReference>
<dbReference type="GO" id="GO:0070475">
    <property type="term" value="P:rRNA base methylation"/>
    <property type="evidence" value="ECO:0007669"/>
    <property type="project" value="UniProtKB-UniRule"/>
</dbReference>
<dbReference type="Gene3D" id="1.10.150.170">
    <property type="entry name" value="Putative methyltransferase TM0872, insert domain"/>
    <property type="match status" value="1"/>
</dbReference>
<dbReference type="Gene3D" id="3.40.50.150">
    <property type="entry name" value="Vaccinia Virus protein VP39"/>
    <property type="match status" value="1"/>
</dbReference>
<dbReference type="HAMAP" id="MF_01007">
    <property type="entry name" value="16SrRNA_methyltr_H"/>
    <property type="match status" value="1"/>
</dbReference>
<dbReference type="InterPro" id="IPR002903">
    <property type="entry name" value="RsmH"/>
</dbReference>
<dbReference type="InterPro" id="IPR023397">
    <property type="entry name" value="SAM-dep_MeTrfase_MraW_recog"/>
</dbReference>
<dbReference type="InterPro" id="IPR029063">
    <property type="entry name" value="SAM-dependent_MTases_sf"/>
</dbReference>
<dbReference type="NCBIfam" id="TIGR00006">
    <property type="entry name" value="16S rRNA (cytosine(1402)-N(4))-methyltransferase RsmH"/>
    <property type="match status" value="1"/>
</dbReference>
<dbReference type="PANTHER" id="PTHR11265:SF0">
    <property type="entry name" value="12S RRNA N4-METHYLCYTIDINE METHYLTRANSFERASE"/>
    <property type="match status" value="1"/>
</dbReference>
<dbReference type="PANTHER" id="PTHR11265">
    <property type="entry name" value="S-ADENOSYL-METHYLTRANSFERASE MRAW"/>
    <property type="match status" value="1"/>
</dbReference>
<dbReference type="Pfam" id="PF01795">
    <property type="entry name" value="Methyltransf_5"/>
    <property type="match status" value="1"/>
</dbReference>
<dbReference type="PIRSF" id="PIRSF004486">
    <property type="entry name" value="MraW"/>
    <property type="match status" value="1"/>
</dbReference>
<dbReference type="SUPFAM" id="SSF81799">
    <property type="entry name" value="Putative methyltransferase TM0872, insert domain"/>
    <property type="match status" value="1"/>
</dbReference>
<dbReference type="SUPFAM" id="SSF53335">
    <property type="entry name" value="S-adenosyl-L-methionine-dependent methyltransferases"/>
    <property type="match status" value="1"/>
</dbReference>
<sequence length="334" mass="37217">MTSDELSFVHDAVLLQEAVAAVLGVKALPKQTDDESQNSLQASGIYVDATFGRGGHSRLLLSQLADNATLIVFDKDPTAIRVAQELASTDSRVQVVHDSFATLTDSLAAMGITQVDGLMADLGISSPQIDDGSRGFSFMRDGAVDMRMDTSRGQSVAEWLETVDDDTLANVLYDFGEERHSRRIARAIKQMDRYKSTLELAEVIKVAHPNWQRGKHPATQSFQAMRIFINNELGDVDNFLEQSIPILKVGGQLAVISFHSLEDRRIKQFLQRHSKGQYPEDENLPMPPKRPRYFSKPKRVGPSKAEISNNPRSRSAWLRMATRTDTDYLADIEP</sequence>
<name>RSMH_PSYA2</name>
<comment type="function">
    <text evidence="1">Specifically methylates the N4 position of cytidine in position 1402 (C1402) of 16S rRNA.</text>
</comment>
<comment type="catalytic activity">
    <reaction evidence="1">
        <text>cytidine(1402) in 16S rRNA + S-adenosyl-L-methionine = N(4)-methylcytidine(1402) in 16S rRNA + S-adenosyl-L-homocysteine + H(+)</text>
        <dbReference type="Rhea" id="RHEA:42928"/>
        <dbReference type="Rhea" id="RHEA-COMP:10286"/>
        <dbReference type="Rhea" id="RHEA-COMP:10287"/>
        <dbReference type="ChEBI" id="CHEBI:15378"/>
        <dbReference type="ChEBI" id="CHEBI:57856"/>
        <dbReference type="ChEBI" id="CHEBI:59789"/>
        <dbReference type="ChEBI" id="CHEBI:74506"/>
        <dbReference type="ChEBI" id="CHEBI:82748"/>
        <dbReference type="EC" id="2.1.1.199"/>
    </reaction>
</comment>
<comment type="subcellular location">
    <subcellularLocation>
        <location evidence="1">Cytoplasm</location>
    </subcellularLocation>
</comment>
<comment type="similarity">
    <text evidence="1">Belongs to the methyltransferase superfamily. RsmH family.</text>
</comment>
<comment type="sequence caution" evidence="3">
    <conflict type="erroneous initiation">
        <sequence resource="EMBL-CDS" id="AAZ19903"/>
    </conflict>
</comment>
<keyword id="KW-0963">Cytoplasm</keyword>
<keyword id="KW-0489">Methyltransferase</keyword>
<keyword id="KW-1185">Reference proteome</keyword>
<keyword id="KW-0698">rRNA processing</keyword>
<keyword id="KW-0949">S-adenosyl-L-methionine</keyword>
<keyword id="KW-0808">Transferase</keyword>
<protein>
    <recommendedName>
        <fullName evidence="1">Ribosomal RNA small subunit methyltransferase H</fullName>
        <ecNumber evidence="1">2.1.1.199</ecNumber>
    </recommendedName>
    <alternativeName>
        <fullName evidence="1">16S rRNA m(4)C1402 methyltransferase</fullName>
    </alternativeName>
    <alternativeName>
        <fullName evidence="1">rRNA (cytosine-N(4)-)-methyltransferase RsmH</fullName>
    </alternativeName>
</protein>
<evidence type="ECO:0000255" key="1">
    <source>
        <dbReference type="HAMAP-Rule" id="MF_01007"/>
    </source>
</evidence>
<evidence type="ECO:0000256" key="2">
    <source>
        <dbReference type="SAM" id="MobiDB-lite"/>
    </source>
</evidence>
<evidence type="ECO:0000305" key="3"/>
<feature type="chain" id="PRO_0000223559" description="Ribosomal RNA small subunit methyltransferase H">
    <location>
        <begin position="1"/>
        <end position="334"/>
    </location>
</feature>
<feature type="region of interest" description="Disordered" evidence="2">
    <location>
        <begin position="272"/>
        <end position="318"/>
    </location>
</feature>
<feature type="compositionally biased region" description="Basic residues" evidence="2">
    <location>
        <begin position="289"/>
        <end position="301"/>
    </location>
</feature>
<feature type="binding site" evidence="1">
    <location>
        <begin position="54"/>
        <end position="56"/>
    </location>
    <ligand>
        <name>S-adenosyl-L-methionine</name>
        <dbReference type="ChEBI" id="CHEBI:59789"/>
    </ligand>
</feature>
<feature type="binding site" evidence="1">
    <location>
        <position position="74"/>
    </location>
    <ligand>
        <name>S-adenosyl-L-methionine</name>
        <dbReference type="ChEBI" id="CHEBI:59789"/>
    </ligand>
</feature>
<feature type="binding site" evidence="1">
    <location>
        <position position="100"/>
    </location>
    <ligand>
        <name>S-adenosyl-L-methionine</name>
        <dbReference type="ChEBI" id="CHEBI:59789"/>
    </ligand>
</feature>
<feature type="binding site" evidence="1">
    <location>
        <position position="121"/>
    </location>
    <ligand>
        <name>S-adenosyl-L-methionine</name>
        <dbReference type="ChEBI" id="CHEBI:59789"/>
    </ligand>
</feature>
<feature type="binding site" evidence="1">
    <location>
        <position position="128"/>
    </location>
    <ligand>
        <name>S-adenosyl-L-methionine</name>
        <dbReference type="ChEBI" id="CHEBI:59789"/>
    </ligand>
</feature>
<proteinExistence type="inferred from homology"/>
<gene>
    <name evidence="1" type="primary">rsmH</name>
    <name type="synonym">mraW</name>
    <name type="ordered locus">Psyc_2056</name>
</gene>
<reference key="1">
    <citation type="journal article" date="2010" name="Appl. Environ. Microbiol.">
        <title>The genome sequence of Psychrobacter arcticus 273-4, a psychroactive Siberian permafrost bacterium, reveals mechanisms for adaptation to low-temperature growth.</title>
        <authorList>
            <person name="Ayala-del-Rio H.L."/>
            <person name="Chain P.S."/>
            <person name="Grzymski J.J."/>
            <person name="Ponder M.A."/>
            <person name="Ivanova N."/>
            <person name="Bergholz P.W."/>
            <person name="Di Bartolo G."/>
            <person name="Hauser L."/>
            <person name="Land M."/>
            <person name="Bakermans C."/>
            <person name="Rodrigues D."/>
            <person name="Klappenbach J."/>
            <person name="Zarka D."/>
            <person name="Larimer F."/>
            <person name="Richardson P."/>
            <person name="Murray A."/>
            <person name="Thomashow M."/>
            <person name="Tiedje J.M."/>
        </authorList>
    </citation>
    <scope>NUCLEOTIDE SEQUENCE [LARGE SCALE GENOMIC DNA]</scope>
    <source>
        <strain>DSM 17307 / VKM B-2377 / 273-4</strain>
    </source>
</reference>
<accession>Q4FQ05</accession>
<organism>
    <name type="scientific">Psychrobacter arcticus (strain DSM 17307 / VKM B-2377 / 273-4)</name>
    <dbReference type="NCBI Taxonomy" id="259536"/>
    <lineage>
        <taxon>Bacteria</taxon>
        <taxon>Pseudomonadati</taxon>
        <taxon>Pseudomonadota</taxon>
        <taxon>Gammaproteobacteria</taxon>
        <taxon>Moraxellales</taxon>
        <taxon>Moraxellaceae</taxon>
        <taxon>Psychrobacter</taxon>
    </lineage>
</organism>